<keyword id="KW-0488">Methylation</keyword>
<keyword id="KW-1185">Reference proteome</keyword>
<keyword id="KW-0687">Ribonucleoprotein</keyword>
<keyword id="KW-0689">Ribosomal protein</keyword>
<keyword id="KW-0694">RNA-binding</keyword>
<keyword id="KW-0699">rRNA-binding</keyword>
<protein>
    <recommendedName>
        <fullName evidence="1">Large ribosomal subunit protein uL3</fullName>
    </recommendedName>
    <alternativeName>
        <fullName evidence="2">50S ribosomal protein L3</fullName>
    </alternativeName>
</protein>
<dbReference type="EMBL" id="CP000868">
    <property type="protein sequence ID" value="ABX13944.1"/>
    <property type="molecule type" value="Genomic_DNA"/>
</dbReference>
<dbReference type="EMBL" id="AP009385">
    <property type="protein sequence ID" value="BAG44890.1"/>
    <property type="molecule type" value="Genomic_DNA"/>
</dbReference>
<dbReference type="RefSeq" id="WP_012212557.1">
    <property type="nucleotide sequence ID" value="NC_010804.1"/>
</dbReference>
<dbReference type="SMR" id="A9ADJ3"/>
<dbReference type="STRING" id="395019.BMULJ_03005"/>
<dbReference type="GeneID" id="93126519"/>
<dbReference type="KEGG" id="bmj:BMULJ_03005"/>
<dbReference type="KEGG" id="bmu:Bmul_0249"/>
<dbReference type="eggNOG" id="COG0087">
    <property type="taxonomic scope" value="Bacteria"/>
</dbReference>
<dbReference type="HOGENOM" id="CLU_044142_4_1_4"/>
<dbReference type="Proteomes" id="UP000008815">
    <property type="component" value="Chromosome 1"/>
</dbReference>
<dbReference type="GO" id="GO:0022625">
    <property type="term" value="C:cytosolic large ribosomal subunit"/>
    <property type="evidence" value="ECO:0007669"/>
    <property type="project" value="TreeGrafter"/>
</dbReference>
<dbReference type="GO" id="GO:0019843">
    <property type="term" value="F:rRNA binding"/>
    <property type="evidence" value="ECO:0007669"/>
    <property type="project" value="UniProtKB-UniRule"/>
</dbReference>
<dbReference type="GO" id="GO:0003735">
    <property type="term" value="F:structural constituent of ribosome"/>
    <property type="evidence" value="ECO:0007669"/>
    <property type="project" value="InterPro"/>
</dbReference>
<dbReference type="GO" id="GO:0006412">
    <property type="term" value="P:translation"/>
    <property type="evidence" value="ECO:0007669"/>
    <property type="project" value="UniProtKB-UniRule"/>
</dbReference>
<dbReference type="FunFam" id="2.40.30.10:FF:000004">
    <property type="entry name" value="50S ribosomal protein L3"/>
    <property type="match status" value="1"/>
</dbReference>
<dbReference type="FunFam" id="3.30.160.810:FF:000001">
    <property type="entry name" value="50S ribosomal protein L3"/>
    <property type="match status" value="1"/>
</dbReference>
<dbReference type="Gene3D" id="3.30.160.810">
    <property type="match status" value="1"/>
</dbReference>
<dbReference type="Gene3D" id="2.40.30.10">
    <property type="entry name" value="Translation factors"/>
    <property type="match status" value="1"/>
</dbReference>
<dbReference type="HAMAP" id="MF_01325_B">
    <property type="entry name" value="Ribosomal_uL3_B"/>
    <property type="match status" value="1"/>
</dbReference>
<dbReference type="InterPro" id="IPR000597">
    <property type="entry name" value="Ribosomal_uL3"/>
</dbReference>
<dbReference type="InterPro" id="IPR019927">
    <property type="entry name" value="Ribosomal_uL3_bac/org-type"/>
</dbReference>
<dbReference type="InterPro" id="IPR019926">
    <property type="entry name" value="Ribosomal_uL3_CS"/>
</dbReference>
<dbReference type="InterPro" id="IPR009000">
    <property type="entry name" value="Transl_B-barrel_sf"/>
</dbReference>
<dbReference type="NCBIfam" id="TIGR03625">
    <property type="entry name" value="L3_bact"/>
    <property type="match status" value="1"/>
</dbReference>
<dbReference type="PANTHER" id="PTHR11229">
    <property type="entry name" value="50S RIBOSOMAL PROTEIN L3"/>
    <property type="match status" value="1"/>
</dbReference>
<dbReference type="PANTHER" id="PTHR11229:SF16">
    <property type="entry name" value="LARGE RIBOSOMAL SUBUNIT PROTEIN UL3C"/>
    <property type="match status" value="1"/>
</dbReference>
<dbReference type="Pfam" id="PF00297">
    <property type="entry name" value="Ribosomal_L3"/>
    <property type="match status" value="1"/>
</dbReference>
<dbReference type="SUPFAM" id="SSF50447">
    <property type="entry name" value="Translation proteins"/>
    <property type="match status" value="1"/>
</dbReference>
<dbReference type="PROSITE" id="PS00474">
    <property type="entry name" value="RIBOSOMAL_L3"/>
    <property type="match status" value="1"/>
</dbReference>
<proteinExistence type="inferred from homology"/>
<accession>A9ADJ3</accession>
<reference key="1">
    <citation type="submission" date="2007-10" db="EMBL/GenBank/DDBJ databases">
        <title>Complete sequence of chromosome 1 of Burkholderia multivorans ATCC 17616.</title>
        <authorList>
            <person name="Copeland A."/>
            <person name="Lucas S."/>
            <person name="Lapidus A."/>
            <person name="Barry K."/>
            <person name="Glavina del Rio T."/>
            <person name="Dalin E."/>
            <person name="Tice H."/>
            <person name="Pitluck S."/>
            <person name="Chain P."/>
            <person name="Malfatti S."/>
            <person name="Shin M."/>
            <person name="Vergez L."/>
            <person name="Schmutz J."/>
            <person name="Larimer F."/>
            <person name="Land M."/>
            <person name="Hauser L."/>
            <person name="Kyrpides N."/>
            <person name="Kim E."/>
            <person name="Tiedje J."/>
            <person name="Richardson P."/>
        </authorList>
    </citation>
    <scope>NUCLEOTIDE SEQUENCE [LARGE SCALE GENOMIC DNA]</scope>
    <source>
        <strain>ATCC 17616 / 249</strain>
    </source>
</reference>
<reference key="2">
    <citation type="submission" date="2007-04" db="EMBL/GenBank/DDBJ databases">
        <title>Complete genome sequence of Burkholderia multivorans ATCC 17616.</title>
        <authorList>
            <person name="Ohtsubo Y."/>
            <person name="Yamashita A."/>
            <person name="Kurokawa K."/>
            <person name="Takami H."/>
            <person name="Yuhara S."/>
            <person name="Nishiyama E."/>
            <person name="Endo R."/>
            <person name="Miyazaki R."/>
            <person name="Ono A."/>
            <person name="Yano K."/>
            <person name="Ito M."/>
            <person name="Sota M."/>
            <person name="Yuji N."/>
            <person name="Hattori M."/>
            <person name="Tsuda M."/>
        </authorList>
    </citation>
    <scope>NUCLEOTIDE SEQUENCE [LARGE SCALE GENOMIC DNA]</scope>
    <source>
        <strain>ATCC 17616 / 249</strain>
    </source>
</reference>
<name>RL3_BURM1</name>
<gene>
    <name evidence="1" type="primary">rplC</name>
    <name type="ordered locus">Bmul_0249</name>
    <name type="ordered locus">BMULJ_03005</name>
</gene>
<feature type="chain" id="PRO_1000141834" description="Large ribosomal subunit protein uL3">
    <location>
        <begin position="1"/>
        <end position="216"/>
    </location>
</feature>
<feature type="modified residue" description="N5-methylglutamine" evidence="1">
    <location>
        <position position="153"/>
    </location>
</feature>
<organism>
    <name type="scientific">Burkholderia multivorans (strain ATCC 17616 / 249)</name>
    <dbReference type="NCBI Taxonomy" id="395019"/>
    <lineage>
        <taxon>Bacteria</taxon>
        <taxon>Pseudomonadati</taxon>
        <taxon>Pseudomonadota</taxon>
        <taxon>Betaproteobacteria</taxon>
        <taxon>Burkholderiales</taxon>
        <taxon>Burkholderiaceae</taxon>
        <taxon>Burkholderia</taxon>
        <taxon>Burkholderia cepacia complex</taxon>
    </lineage>
</organism>
<sequence>MSLGLVGRKVGMTRIFTAEGDSIPVTVVDVSDNRVTQIKTVETDGYTAVQVAFGSRRASRVTKPLAGHLAKAGVEAGEILKEFRIDAAKAAELSNGAIVGPDLFEVGQKVDVQGVSIGKGYAGTIKRYNFGSGRASHGNSRSHNVPGSIGMAQDPGRVFPGKRMTGHMGDVTVTVQNLEIARIDAERKLLLVKGAIPGAKGGKVFVTPAVKTKGAK</sequence>
<evidence type="ECO:0000255" key="1">
    <source>
        <dbReference type="HAMAP-Rule" id="MF_01325"/>
    </source>
</evidence>
<evidence type="ECO:0000305" key="2"/>
<comment type="function">
    <text evidence="1">One of the primary rRNA binding proteins, it binds directly near the 3'-end of the 23S rRNA, where it nucleates assembly of the 50S subunit.</text>
</comment>
<comment type="subunit">
    <text evidence="1">Part of the 50S ribosomal subunit. Forms a cluster with proteins L14 and L19.</text>
</comment>
<comment type="PTM">
    <text evidence="1">Methylated by PrmB.</text>
</comment>
<comment type="similarity">
    <text evidence="1">Belongs to the universal ribosomal protein uL3 family.</text>
</comment>